<feature type="transit peptide" description="Chloroplast" evidence="3">
    <location>
        <begin position="1"/>
        <end status="unknown"/>
    </location>
</feature>
<feature type="chain" id="PRO_0000449308" description="Class I diterpene synthase 2, chloroplastic">
    <location>
        <begin status="unknown"/>
        <end position="589"/>
    </location>
</feature>
<feature type="short sequence motif" description="DDXXD motif" evidence="1">
    <location>
        <begin position="328"/>
        <end position="332"/>
    </location>
</feature>
<feature type="binding site" evidence="2">
    <location>
        <position position="328"/>
    </location>
    <ligand>
        <name>Mg(2+)</name>
        <dbReference type="ChEBI" id="CHEBI:18420"/>
        <label>1</label>
    </ligand>
</feature>
<feature type="binding site" evidence="2">
    <location>
        <position position="328"/>
    </location>
    <ligand>
        <name>Mg(2+)</name>
        <dbReference type="ChEBI" id="CHEBI:18420"/>
        <label>2</label>
    </ligand>
</feature>
<feature type="binding site" evidence="2">
    <location>
        <position position="332"/>
    </location>
    <ligand>
        <name>Mg(2+)</name>
        <dbReference type="ChEBI" id="CHEBI:18420"/>
        <label>1</label>
    </ligand>
</feature>
<feature type="binding site" evidence="2">
    <location>
        <position position="332"/>
    </location>
    <ligand>
        <name>Mg(2+)</name>
        <dbReference type="ChEBI" id="CHEBI:18420"/>
        <label>2</label>
    </ligand>
</feature>
<feature type="binding site" evidence="2">
    <location>
        <position position="472"/>
    </location>
    <ligand>
        <name>Mg(2+)</name>
        <dbReference type="ChEBI" id="CHEBI:18420"/>
        <label>3</label>
    </ligand>
</feature>
<feature type="binding site" evidence="2">
    <location>
        <position position="476"/>
    </location>
    <ligand>
        <name>Mg(2+)</name>
        <dbReference type="ChEBI" id="CHEBI:18420"/>
        <label>3</label>
    </ligand>
</feature>
<feature type="binding site" evidence="2">
    <location>
        <position position="480"/>
    </location>
    <ligand>
        <name>Mg(2+)</name>
        <dbReference type="ChEBI" id="CHEBI:18420"/>
        <label>3</label>
    </ligand>
</feature>
<evidence type="ECO:0000250" key="1">
    <source>
        <dbReference type="UniProtKB" id="G8GJ94"/>
    </source>
</evidence>
<evidence type="ECO:0000250" key="2">
    <source>
        <dbReference type="UniProtKB" id="Q40577"/>
    </source>
</evidence>
<evidence type="ECO:0000255" key="3"/>
<evidence type="ECO:0000269" key="4">
    <source>
    </source>
</evidence>
<evidence type="ECO:0000303" key="5">
    <source>
    </source>
</evidence>
<evidence type="ECO:0000305" key="6"/>
<evidence type="ECO:0000305" key="7">
    <source>
    </source>
</evidence>
<evidence type="ECO:0000305" key="8">
    <source>
    </source>
</evidence>
<evidence type="ECO:0000305" key="9">
    <source>
    </source>
</evidence>
<accession>A0A2K9RFZ2</accession>
<organism>
    <name type="scientific">Vitex agnus-castus</name>
    <name type="common">Chaste tree</name>
    <dbReference type="NCBI Taxonomy" id="54477"/>
    <lineage>
        <taxon>Eukaryota</taxon>
        <taxon>Viridiplantae</taxon>
        <taxon>Streptophyta</taxon>
        <taxon>Embryophyta</taxon>
        <taxon>Tracheophyta</taxon>
        <taxon>Spermatophyta</taxon>
        <taxon>Magnoliopsida</taxon>
        <taxon>eudicotyledons</taxon>
        <taxon>Gunneridae</taxon>
        <taxon>Pentapetalae</taxon>
        <taxon>asterids</taxon>
        <taxon>lamiids</taxon>
        <taxon>Lamiales</taxon>
        <taxon>Lamiaceae</taxon>
        <taxon>Viticoideae</taxon>
        <taxon>Vitex</taxon>
    </lineage>
</organism>
<sequence>MSLRFNLIVTPFSNHRIRNRRETFPAQEFPVATSKSAVKVKCNLITSTDLVGKVREKINGKVDNSLEVPAIHPVDIPSNLCMIDTLERLGVDRYFQSEIDGVLEETYRLWQQKEKDIFADVTCRAMAFRLLRVKGYEVSSDELAPYADQAHVNLQISDVTAVIELYRASQERIYEEESTLEKLHAWTSTYLKQQLVSGTISDKKLHKQVEYYLKNYHGILDLVGIRRSLDLYDIDHYQILKAADRFRTICKDLLAFSRQDFNNCQAQYQRELQLLQRWYEDCRLDKLNYGRDVLRISYFVSSAIIGDPELSDARLAFAKYCVLTTCIDDFFDHAGSREESYRILELVKEWKEKPAEDYGSKEVEFLFTAVYNTVNELAEMAYVEQGRCVKSLLIKLWVELLTSFKKELDSWTDDTALSLDEYLSSSWVSITSRINILTSIQFLGLKLSEEMLSSQECTDLCRHGSLVVRLLNDMQTFEKERRENTKNSVSILLEAPKHEGAITEEEVISKIKEIVEQNRRKLMQMVYQRGTIFPRKCKDVFLKSCRGGYYLYSNGDEFTSPVQIMEDMKLCYEPLTFHPLEANNGGNKN</sequence>
<reference key="1">
    <citation type="journal article" date="2018" name="Plant J.">
        <title>Biosynthesis of bioactive diterpenoids in the medicinal plant Vitex agnus-castus.</title>
        <authorList>
            <person name="Heskes A.M."/>
            <person name="Sundram T.C.M."/>
            <person name="Boughton B.A."/>
            <person name="Jensen N.B."/>
            <person name="Hansen N.L."/>
            <person name="Crocoll C."/>
            <person name="Cozzi F."/>
            <person name="Rasmussen S."/>
            <person name="Hamberger B."/>
            <person name="Hamberger B."/>
            <person name="Staerk D."/>
            <person name="Moeller B.L."/>
            <person name="Pateraki I."/>
        </authorList>
    </citation>
    <scope>NUCLEOTIDE SEQUENCE [MRNA]</scope>
    <scope>FUNCTION</scope>
    <scope>CATALYTIC ACTIVITY</scope>
    <scope>PATHWAY</scope>
    <scope>TISSUE SPECIFICITY</scope>
    <source>
        <tissue>Fruit</tissue>
        <tissue>Leaf</tissue>
        <tissue>Trichome gland</tissue>
    </source>
</reference>
<reference key="2">
    <citation type="journal article" date="2003" name="Phytomedicine">
        <title>Chaste tree (Vitex agnus-castus)--pharmacology and clinical indications.</title>
        <authorList>
            <person name="Wuttke W."/>
            <person name="Jarry H."/>
            <person name="Christoffel V."/>
            <person name="Spengler B."/>
            <person name="Seidlova-Wuttke D."/>
        </authorList>
    </citation>
    <scope>REVIEW ON MENSTRUAL CYCLE DISORDERS</scope>
</reference>
<reference key="3">
    <citation type="journal article" date="2019" name="Nat. Prod. Rep.">
        <title>Non-volatile natural products in plant glandular trichomes: chemistry, biological activities and biosynthesis.</title>
        <authorList>
            <person name="Liu Y."/>
            <person name="Jing S.-X."/>
            <person name="Luo S.-H."/>
            <person name="Li S.-H."/>
        </authorList>
    </citation>
    <scope>PATHWAY</scope>
    <scope>REVIEW</scope>
</reference>
<name>TPS2_VITAC</name>
<comment type="function">
    <text evidence="4 7 8 9">Involved in the biosynthesis of labdane-type diterpenoid including cleroda-dienols, and peregrinol lactones and furan derivatives, dopaminergic diterpenoids that can bind to dopamine receptors in the human pituitary gland, have probably ability to lower prolactin levels, and are used to treat menstrual cycle disorders (e.g. premenstrual syndrome and mastodynia) (Probable). Terpene synthase the catalyzes the conversion of peregrinol diphosphate to viteagnusin D and 9,13(R)-epoxy-labd-14-ene, and of syn-copalyl diphosophate to vitexifolin A (PubMed:29315936).</text>
</comment>
<comment type="catalytic activity">
    <reaction evidence="4">
        <text>9alpha-copalyl diphosphate + H2O = (13S)-vitexifolin A + diphosphate</text>
        <dbReference type="Rhea" id="RHEA:40027"/>
        <dbReference type="ChEBI" id="CHEBI:15377"/>
        <dbReference type="ChEBI" id="CHEBI:33019"/>
        <dbReference type="ChEBI" id="CHEBI:58622"/>
        <dbReference type="ChEBI" id="CHEBI:76954"/>
    </reaction>
    <physiologicalReaction direction="left-to-right" evidence="4">
        <dbReference type="Rhea" id="RHEA:40028"/>
    </physiologicalReaction>
</comment>
<comment type="catalytic activity">
    <reaction evidence="4">
        <text>peregrinol diphosphate = (13R)-9,13-epoxylabd-14-ene + diphosphate</text>
        <dbReference type="Rhea" id="RHEA:54512"/>
        <dbReference type="ChEBI" id="CHEBI:33019"/>
        <dbReference type="ChEBI" id="CHEBI:138232"/>
        <dbReference type="ChEBI" id="CHEBI:138233"/>
        <dbReference type="EC" id="4.2.3.189"/>
    </reaction>
    <physiologicalReaction direction="left-to-right" evidence="4">
        <dbReference type="Rhea" id="RHEA:54513"/>
    </physiologicalReaction>
</comment>
<comment type="catalytic activity">
    <reaction evidence="4">
        <text>peregrinol diphosphate + H2O = viteagnusin D + diphosphate</text>
        <dbReference type="Rhea" id="RHEA:62180"/>
        <dbReference type="ChEBI" id="CHEBI:15377"/>
        <dbReference type="ChEBI" id="CHEBI:33019"/>
        <dbReference type="ChEBI" id="CHEBI:138232"/>
        <dbReference type="ChEBI" id="CHEBI:145543"/>
    </reaction>
    <physiologicalReaction direction="left-to-right" evidence="4">
        <dbReference type="Rhea" id="RHEA:62181"/>
    </physiologicalReaction>
</comment>
<comment type="cofactor">
    <cofactor evidence="2">
        <name>Mg(2+)</name>
        <dbReference type="ChEBI" id="CHEBI:18420"/>
    </cofactor>
    <text evidence="2">Binds 3 Mg(2+) ions per subunit.</text>
</comment>
<comment type="pathway">
    <text evidence="8 9">Secondary metabolite biosynthesis; terpenoid biosynthesis.</text>
</comment>
<comment type="subcellular location">
    <subcellularLocation>
        <location evidence="3">Plastid</location>
        <location evidence="3">Chloroplast</location>
    </subcellularLocation>
</comment>
<comment type="tissue specificity">
    <text evidence="4">Mostly expressed in trichomes of leaves and fruits.</text>
</comment>
<comment type="domain">
    <text evidence="1">The Asp-Asp-Xaa-Xaa-Asp/Glu (DDXXD/E) motif is important for the catalytic activity, presumably through binding to Mg(2+).</text>
</comment>
<comment type="similarity">
    <text evidence="6">Belongs to the terpene synthase family.</text>
</comment>
<dbReference type="EC" id="4.2.3.-" evidence="4"/>
<dbReference type="EC" id="4.2.3.189" evidence="4"/>
<dbReference type="EMBL" id="MG696749">
    <property type="protein sequence ID" value="AUT77121.1"/>
    <property type="molecule type" value="mRNA"/>
</dbReference>
<dbReference type="SMR" id="A0A2K9RFZ2"/>
<dbReference type="UniPathway" id="UPA00213"/>
<dbReference type="GO" id="GO:0009507">
    <property type="term" value="C:chloroplast"/>
    <property type="evidence" value="ECO:0007669"/>
    <property type="project" value="UniProtKB-SubCell"/>
</dbReference>
<dbReference type="GO" id="GO:0062204">
    <property type="term" value="F:(13S)-vitexifolin A synthase activity"/>
    <property type="evidence" value="ECO:0000314"/>
    <property type="project" value="UniProtKB"/>
</dbReference>
<dbReference type="GO" id="GO:0106239">
    <property type="term" value="F:9,13-epoxylabda-14-ene synthase activity"/>
    <property type="evidence" value="ECO:0000314"/>
    <property type="project" value="UniProtKB"/>
</dbReference>
<dbReference type="GO" id="GO:0000287">
    <property type="term" value="F:magnesium ion binding"/>
    <property type="evidence" value="ECO:0007669"/>
    <property type="project" value="InterPro"/>
</dbReference>
<dbReference type="GO" id="GO:0010333">
    <property type="term" value="F:terpene synthase activity"/>
    <property type="evidence" value="ECO:0007669"/>
    <property type="project" value="InterPro"/>
</dbReference>
<dbReference type="GO" id="GO:0062203">
    <property type="term" value="F:Viteagnusin D synthase activity"/>
    <property type="evidence" value="ECO:0000314"/>
    <property type="project" value="UniProtKB"/>
</dbReference>
<dbReference type="GO" id="GO:0009686">
    <property type="term" value="P:gibberellin biosynthetic process"/>
    <property type="evidence" value="ECO:0007669"/>
    <property type="project" value="TreeGrafter"/>
</dbReference>
<dbReference type="FunFam" id="1.50.10.130:FF:000002">
    <property type="entry name" value="Ent-copalyl diphosphate synthase, chloroplastic"/>
    <property type="match status" value="1"/>
</dbReference>
<dbReference type="FunFam" id="1.10.600.10:FF:000005">
    <property type="entry name" value="Ent-kaur-16-ene synthase, chloroplastic"/>
    <property type="match status" value="1"/>
</dbReference>
<dbReference type="Gene3D" id="1.10.600.10">
    <property type="entry name" value="Farnesyl Diphosphate Synthase"/>
    <property type="match status" value="1"/>
</dbReference>
<dbReference type="Gene3D" id="1.50.10.130">
    <property type="entry name" value="Terpene synthase, N-terminal domain"/>
    <property type="match status" value="1"/>
</dbReference>
<dbReference type="InterPro" id="IPR008949">
    <property type="entry name" value="Isoprenoid_synthase_dom_sf"/>
</dbReference>
<dbReference type="InterPro" id="IPR001906">
    <property type="entry name" value="Terpene_synth_N"/>
</dbReference>
<dbReference type="InterPro" id="IPR036965">
    <property type="entry name" value="Terpene_synth_N_sf"/>
</dbReference>
<dbReference type="InterPro" id="IPR050148">
    <property type="entry name" value="Terpene_synthase-like"/>
</dbReference>
<dbReference type="InterPro" id="IPR005630">
    <property type="entry name" value="Terpene_synthase_metal-bd"/>
</dbReference>
<dbReference type="InterPro" id="IPR008930">
    <property type="entry name" value="Terpenoid_cyclase/PrenylTrfase"/>
</dbReference>
<dbReference type="PANTHER" id="PTHR31739:SF33">
    <property type="entry name" value="CIS-ABIENOL SYNTHASE, CHLOROPLASTIC"/>
    <property type="match status" value="1"/>
</dbReference>
<dbReference type="PANTHER" id="PTHR31739">
    <property type="entry name" value="ENT-COPALYL DIPHOSPHATE SYNTHASE, CHLOROPLASTIC"/>
    <property type="match status" value="1"/>
</dbReference>
<dbReference type="Pfam" id="PF01397">
    <property type="entry name" value="Terpene_synth"/>
    <property type="match status" value="1"/>
</dbReference>
<dbReference type="Pfam" id="PF03936">
    <property type="entry name" value="Terpene_synth_C"/>
    <property type="match status" value="1"/>
</dbReference>
<dbReference type="SUPFAM" id="SSF48239">
    <property type="entry name" value="Terpenoid cyclases/Protein prenyltransferases"/>
    <property type="match status" value="1"/>
</dbReference>
<dbReference type="SUPFAM" id="SSF48576">
    <property type="entry name" value="Terpenoid synthases"/>
    <property type="match status" value="1"/>
</dbReference>
<keyword id="KW-0150">Chloroplast</keyword>
<keyword id="KW-0456">Lyase</keyword>
<keyword id="KW-0460">Magnesium</keyword>
<keyword id="KW-0479">Metal-binding</keyword>
<keyword id="KW-0934">Plastid</keyword>
<keyword id="KW-0809">Transit peptide</keyword>
<protein>
    <recommendedName>
        <fullName evidence="5">Class I diterpene synthase 2, chloroplastic</fullName>
        <shortName evidence="5">VacTPS2</shortName>
    </recommendedName>
    <alternativeName>
        <fullName evidence="5">(13S)-vitexifolin A synthase</fullName>
        <ecNumber evidence="4">4.2.3.-</ecNumber>
    </alternativeName>
    <alternativeName>
        <fullName evidence="5">9,13-epoxylabda-14-ene synthase</fullName>
        <ecNumber evidence="4">4.2.3.189</ecNumber>
    </alternativeName>
    <alternativeName>
        <fullName evidence="5">Viteagnusin D synthase</fullName>
        <ecNumber evidence="4">4.2.3.-</ecNumber>
    </alternativeName>
</protein>
<proteinExistence type="evidence at protein level"/>
<gene>
    <name evidence="5" type="primary">TPS2</name>
</gene>